<proteinExistence type="evidence at protein level"/>
<comment type="function">
    <text evidence="1">Transfers the 4'-phosphopantetheine moiety from coenzyme A to a Ser of acyl-carrier-protein.</text>
</comment>
<comment type="catalytic activity">
    <reaction evidence="1">
        <text>apo-[ACP] + CoA = holo-[ACP] + adenosine 3',5'-bisphosphate + H(+)</text>
        <dbReference type="Rhea" id="RHEA:12068"/>
        <dbReference type="Rhea" id="RHEA-COMP:9685"/>
        <dbReference type="Rhea" id="RHEA-COMP:9690"/>
        <dbReference type="ChEBI" id="CHEBI:15378"/>
        <dbReference type="ChEBI" id="CHEBI:29999"/>
        <dbReference type="ChEBI" id="CHEBI:57287"/>
        <dbReference type="ChEBI" id="CHEBI:58343"/>
        <dbReference type="ChEBI" id="CHEBI:64479"/>
        <dbReference type="EC" id="2.7.8.7"/>
    </reaction>
</comment>
<comment type="cofactor">
    <cofactor evidence="1">
        <name>Mg(2+)</name>
        <dbReference type="ChEBI" id="CHEBI:18420"/>
    </cofactor>
</comment>
<comment type="subcellular location">
    <subcellularLocation>
        <location evidence="1">Cytoplasm</location>
    </subcellularLocation>
</comment>
<comment type="similarity">
    <text evidence="1">Belongs to the P-Pant transferase superfamily. AcpS family.</text>
</comment>
<evidence type="ECO:0000255" key="1">
    <source>
        <dbReference type="HAMAP-Rule" id="MF_00101"/>
    </source>
</evidence>
<evidence type="ECO:0007829" key="2">
    <source>
        <dbReference type="PDB" id="5SUV"/>
    </source>
</evidence>
<organism>
    <name type="scientific">Neisseria meningitidis serogroup C / serotype 2a (strain ATCC 700532 / DSM 15464 / FAM18)</name>
    <dbReference type="NCBI Taxonomy" id="272831"/>
    <lineage>
        <taxon>Bacteria</taxon>
        <taxon>Pseudomonadati</taxon>
        <taxon>Pseudomonadota</taxon>
        <taxon>Betaproteobacteria</taxon>
        <taxon>Neisseriales</taxon>
        <taxon>Neisseriaceae</taxon>
        <taxon>Neisseria</taxon>
    </lineage>
</organism>
<name>ACPS_NEIMF</name>
<feature type="chain" id="PRO_1000008461" description="Holo-[acyl-carrier-protein] synthase">
    <location>
        <begin position="1"/>
        <end position="125"/>
    </location>
</feature>
<feature type="binding site" evidence="1">
    <location>
        <position position="8"/>
    </location>
    <ligand>
        <name>Mg(2+)</name>
        <dbReference type="ChEBI" id="CHEBI:18420"/>
    </ligand>
</feature>
<feature type="binding site" evidence="1">
    <location>
        <position position="57"/>
    </location>
    <ligand>
        <name>Mg(2+)</name>
        <dbReference type="ChEBI" id="CHEBI:18420"/>
    </ligand>
</feature>
<feature type="strand" evidence="2">
    <location>
        <begin position="2"/>
        <end position="11"/>
    </location>
</feature>
<feature type="helix" evidence="2">
    <location>
        <begin position="12"/>
        <end position="22"/>
    </location>
</feature>
<feature type="helix" evidence="2">
    <location>
        <begin position="25"/>
        <end position="30"/>
    </location>
</feature>
<feature type="helix" evidence="2">
    <location>
        <begin position="33"/>
        <end position="38"/>
    </location>
</feature>
<feature type="helix" evidence="2">
    <location>
        <begin position="39"/>
        <end position="41"/>
    </location>
</feature>
<feature type="helix" evidence="2">
    <location>
        <begin position="45"/>
        <end position="62"/>
    </location>
</feature>
<feature type="helix" evidence="2">
    <location>
        <begin position="73"/>
        <end position="75"/>
    </location>
</feature>
<feature type="strand" evidence="2">
    <location>
        <begin position="76"/>
        <end position="80"/>
    </location>
</feature>
<feature type="strand" evidence="2">
    <location>
        <begin position="86"/>
        <end position="90"/>
    </location>
</feature>
<feature type="helix" evidence="2">
    <location>
        <begin position="92"/>
        <end position="101"/>
    </location>
</feature>
<feature type="strand" evidence="2">
    <location>
        <begin position="105"/>
        <end position="113"/>
    </location>
</feature>
<feature type="strand" evidence="2">
    <location>
        <begin position="116"/>
        <end position="124"/>
    </location>
</feature>
<accession>A1KVH5</accession>
<gene>
    <name evidence="1" type="primary">acpS</name>
    <name type="ordered locus">NMC1700</name>
</gene>
<protein>
    <recommendedName>
        <fullName evidence="1">Holo-[acyl-carrier-protein] synthase</fullName>
        <shortName evidence="1">Holo-ACP synthase</shortName>
        <ecNumber evidence="1">2.7.8.7</ecNumber>
    </recommendedName>
    <alternativeName>
        <fullName evidence="1">4'-phosphopantetheinyl transferase AcpS</fullName>
    </alternativeName>
</protein>
<keyword id="KW-0002">3D-structure</keyword>
<keyword id="KW-0963">Cytoplasm</keyword>
<keyword id="KW-0275">Fatty acid biosynthesis</keyword>
<keyword id="KW-0276">Fatty acid metabolism</keyword>
<keyword id="KW-0444">Lipid biosynthesis</keyword>
<keyword id="KW-0443">Lipid metabolism</keyword>
<keyword id="KW-0460">Magnesium</keyword>
<keyword id="KW-0479">Metal-binding</keyword>
<keyword id="KW-0808">Transferase</keyword>
<dbReference type="EC" id="2.7.8.7" evidence="1"/>
<dbReference type="EMBL" id="AM421808">
    <property type="protein sequence ID" value="CAM10879.1"/>
    <property type="molecule type" value="Genomic_DNA"/>
</dbReference>
<dbReference type="RefSeq" id="WP_002212541.1">
    <property type="nucleotide sequence ID" value="NC_008767.1"/>
</dbReference>
<dbReference type="PDB" id="5CMO">
    <property type="method" value="X-ray"/>
    <property type="resolution" value="2.00 A"/>
    <property type="chains" value="A/B/C=1-125"/>
</dbReference>
<dbReference type="PDB" id="5SUV">
    <property type="method" value="X-ray"/>
    <property type="resolution" value="1.75 A"/>
    <property type="chains" value="A/B/C=1-125"/>
</dbReference>
<dbReference type="PDBsum" id="5CMO"/>
<dbReference type="PDBsum" id="5SUV"/>
<dbReference type="SMR" id="A1KVH5"/>
<dbReference type="KEGG" id="nmc:NMC1700"/>
<dbReference type="HOGENOM" id="CLU_089696_3_1_4"/>
<dbReference type="EvolutionaryTrace" id="A1KVH5"/>
<dbReference type="Proteomes" id="UP000002286">
    <property type="component" value="Chromosome"/>
</dbReference>
<dbReference type="GO" id="GO:0005737">
    <property type="term" value="C:cytoplasm"/>
    <property type="evidence" value="ECO:0007669"/>
    <property type="project" value="UniProtKB-SubCell"/>
</dbReference>
<dbReference type="GO" id="GO:0008897">
    <property type="term" value="F:holo-[acyl-carrier-protein] synthase activity"/>
    <property type="evidence" value="ECO:0007669"/>
    <property type="project" value="UniProtKB-UniRule"/>
</dbReference>
<dbReference type="GO" id="GO:0000287">
    <property type="term" value="F:magnesium ion binding"/>
    <property type="evidence" value="ECO:0007669"/>
    <property type="project" value="UniProtKB-UniRule"/>
</dbReference>
<dbReference type="GO" id="GO:0006633">
    <property type="term" value="P:fatty acid biosynthetic process"/>
    <property type="evidence" value="ECO:0007669"/>
    <property type="project" value="UniProtKB-UniRule"/>
</dbReference>
<dbReference type="Gene3D" id="3.90.470.20">
    <property type="entry name" value="4'-phosphopantetheinyl transferase domain"/>
    <property type="match status" value="1"/>
</dbReference>
<dbReference type="HAMAP" id="MF_00101">
    <property type="entry name" value="AcpS"/>
    <property type="match status" value="1"/>
</dbReference>
<dbReference type="InterPro" id="IPR008278">
    <property type="entry name" value="4-PPantetheinyl_Trfase_dom"/>
</dbReference>
<dbReference type="InterPro" id="IPR037143">
    <property type="entry name" value="4-PPantetheinyl_Trfase_dom_sf"/>
</dbReference>
<dbReference type="InterPro" id="IPR002582">
    <property type="entry name" value="ACPS"/>
</dbReference>
<dbReference type="InterPro" id="IPR004568">
    <property type="entry name" value="Ppantetheine-prot_Trfase_dom"/>
</dbReference>
<dbReference type="NCBIfam" id="TIGR00516">
    <property type="entry name" value="acpS"/>
    <property type="match status" value="1"/>
</dbReference>
<dbReference type="NCBIfam" id="TIGR00556">
    <property type="entry name" value="pantethn_trn"/>
    <property type="match status" value="1"/>
</dbReference>
<dbReference type="Pfam" id="PF01648">
    <property type="entry name" value="ACPS"/>
    <property type="match status" value="1"/>
</dbReference>
<dbReference type="SUPFAM" id="SSF56214">
    <property type="entry name" value="4'-phosphopantetheinyl transferase"/>
    <property type="match status" value="1"/>
</dbReference>
<sequence length="125" mass="13677">MIYGIGTDIVSLKRIIRLNKKFGQAFAGRILTPEELLEFPQAGKPVNYLAKRFAAKEAFAKAVGTGIRGAVSFRNIGIGHDALGKPEFFYGPALSKWLEEQGISRVSLSMSDEEDTVLAFVVAEK</sequence>
<reference key="1">
    <citation type="journal article" date="2007" name="PLoS Genet.">
        <title>Meningococcal genetic variation mechanisms viewed through comparative analysis of serogroup C strain FAM18.</title>
        <authorList>
            <person name="Bentley S.D."/>
            <person name="Vernikos G.S."/>
            <person name="Snyder L.A.S."/>
            <person name="Churcher C."/>
            <person name="Arrowsmith C."/>
            <person name="Chillingworth T."/>
            <person name="Cronin A."/>
            <person name="Davis P.H."/>
            <person name="Holroyd N.E."/>
            <person name="Jagels K."/>
            <person name="Maddison M."/>
            <person name="Moule S."/>
            <person name="Rabbinowitsch E."/>
            <person name="Sharp S."/>
            <person name="Unwin L."/>
            <person name="Whitehead S."/>
            <person name="Quail M.A."/>
            <person name="Achtman M."/>
            <person name="Barrell B.G."/>
            <person name="Saunders N.J."/>
            <person name="Parkhill J."/>
        </authorList>
    </citation>
    <scope>NUCLEOTIDE SEQUENCE [LARGE SCALE GENOMIC DNA]</scope>
    <source>
        <strain>ATCC 700532 / DSM 15464 / FAM18</strain>
    </source>
</reference>